<name>SYC_CHLL3</name>
<feature type="chain" id="PRO_0000240932" description="Cysteine--tRNA ligase">
    <location>
        <begin position="1"/>
        <end position="483"/>
    </location>
</feature>
<feature type="short sequence motif" description="'HIGH' region">
    <location>
        <begin position="31"/>
        <end position="41"/>
    </location>
</feature>
<feature type="short sequence motif" description="'KMSKS' region">
    <location>
        <begin position="278"/>
        <end position="282"/>
    </location>
</feature>
<feature type="binding site" evidence="1">
    <location>
        <position position="29"/>
    </location>
    <ligand>
        <name>Zn(2+)</name>
        <dbReference type="ChEBI" id="CHEBI:29105"/>
    </ligand>
</feature>
<feature type="binding site" evidence="1">
    <location>
        <position position="221"/>
    </location>
    <ligand>
        <name>Zn(2+)</name>
        <dbReference type="ChEBI" id="CHEBI:29105"/>
    </ligand>
</feature>
<feature type="binding site" evidence="1">
    <location>
        <position position="246"/>
    </location>
    <ligand>
        <name>Zn(2+)</name>
        <dbReference type="ChEBI" id="CHEBI:29105"/>
    </ligand>
</feature>
<feature type="binding site" evidence="1">
    <location>
        <position position="250"/>
    </location>
    <ligand>
        <name>Zn(2+)</name>
        <dbReference type="ChEBI" id="CHEBI:29105"/>
    </ligand>
</feature>
<feature type="binding site" evidence="1">
    <location>
        <position position="281"/>
    </location>
    <ligand>
        <name>ATP</name>
        <dbReference type="ChEBI" id="CHEBI:30616"/>
    </ligand>
</feature>
<comment type="catalytic activity">
    <reaction evidence="1">
        <text>tRNA(Cys) + L-cysteine + ATP = L-cysteinyl-tRNA(Cys) + AMP + diphosphate</text>
        <dbReference type="Rhea" id="RHEA:17773"/>
        <dbReference type="Rhea" id="RHEA-COMP:9661"/>
        <dbReference type="Rhea" id="RHEA-COMP:9679"/>
        <dbReference type="ChEBI" id="CHEBI:30616"/>
        <dbReference type="ChEBI" id="CHEBI:33019"/>
        <dbReference type="ChEBI" id="CHEBI:35235"/>
        <dbReference type="ChEBI" id="CHEBI:78442"/>
        <dbReference type="ChEBI" id="CHEBI:78517"/>
        <dbReference type="ChEBI" id="CHEBI:456215"/>
        <dbReference type="EC" id="6.1.1.16"/>
    </reaction>
</comment>
<comment type="cofactor">
    <cofactor evidence="1">
        <name>Zn(2+)</name>
        <dbReference type="ChEBI" id="CHEBI:29105"/>
    </cofactor>
    <text evidence="1">Binds 1 zinc ion per subunit.</text>
</comment>
<comment type="subunit">
    <text evidence="1">Monomer.</text>
</comment>
<comment type="subcellular location">
    <subcellularLocation>
        <location evidence="1">Cytoplasm</location>
    </subcellularLocation>
</comment>
<comment type="similarity">
    <text evidence="1">Belongs to the class-I aminoacyl-tRNA synthetase family.</text>
</comment>
<accession>Q3B6D2</accession>
<dbReference type="EC" id="6.1.1.16" evidence="1"/>
<dbReference type="EMBL" id="CP000096">
    <property type="protein sequence ID" value="ABB23099.1"/>
    <property type="molecule type" value="Genomic_DNA"/>
</dbReference>
<dbReference type="RefSeq" id="WP_011356974.1">
    <property type="nucleotide sequence ID" value="NC_007512.1"/>
</dbReference>
<dbReference type="SMR" id="Q3B6D2"/>
<dbReference type="STRING" id="319225.Plut_0211"/>
<dbReference type="KEGG" id="plt:Plut_0211"/>
<dbReference type="eggNOG" id="COG0215">
    <property type="taxonomic scope" value="Bacteria"/>
</dbReference>
<dbReference type="HOGENOM" id="CLU_013528_0_1_10"/>
<dbReference type="OrthoDB" id="9815130at2"/>
<dbReference type="Proteomes" id="UP000002709">
    <property type="component" value="Chromosome"/>
</dbReference>
<dbReference type="GO" id="GO:0005829">
    <property type="term" value="C:cytosol"/>
    <property type="evidence" value="ECO:0007669"/>
    <property type="project" value="TreeGrafter"/>
</dbReference>
<dbReference type="GO" id="GO:0005524">
    <property type="term" value="F:ATP binding"/>
    <property type="evidence" value="ECO:0007669"/>
    <property type="project" value="UniProtKB-UniRule"/>
</dbReference>
<dbReference type="GO" id="GO:0004817">
    <property type="term" value="F:cysteine-tRNA ligase activity"/>
    <property type="evidence" value="ECO:0007669"/>
    <property type="project" value="UniProtKB-UniRule"/>
</dbReference>
<dbReference type="GO" id="GO:0008270">
    <property type="term" value="F:zinc ion binding"/>
    <property type="evidence" value="ECO:0007669"/>
    <property type="project" value="UniProtKB-UniRule"/>
</dbReference>
<dbReference type="GO" id="GO:0006423">
    <property type="term" value="P:cysteinyl-tRNA aminoacylation"/>
    <property type="evidence" value="ECO:0007669"/>
    <property type="project" value="UniProtKB-UniRule"/>
</dbReference>
<dbReference type="CDD" id="cd00672">
    <property type="entry name" value="CysRS_core"/>
    <property type="match status" value="1"/>
</dbReference>
<dbReference type="Gene3D" id="1.20.120.1910">
    <property type="entry name" value="Cysteine-tRNA ligase, C-terminal anti-codon recognition domain"/>
    <property type="match status" value="1"/>
</dbReference>
<dbReference type="Gene3D" id="3.40.50.620">
    <property type="entry name" value="HUPs"/>
    <property type="match status" value="1"/>
</dbReference>
<dbReference type="HAMAP" id="MF_00041">
    <property type="entry name" value="Cys_tRNA_synth"/>
    <property type="match status" value="1"/>
</dbReference>
<dbReference type="InterPro" id="IPR015803">
    <property type="entry name" value="Cys-tRNA-ligase"/>
</dbReference>
<dbReference type="InterPro" id="IPR015273">
    <property type="entry name" value="Cys-tRNA-synt_Ia_DALR"/>
</dbReference>
<dbReference type="InterPro" id="IPR024909">
    <property type="entry name" value="Cys-tRNA/MSH_ligase"/>
</dbReference>
<dbReference type="InterPro" id="IPR014729">
    <property type="entry name" value="Rossmann-like_a/b/a_fold"/>
</dbReference>
<dbReference type="InterPro" id="IPR032678">
    <property type="entry name" value="tRNA-synt_1_cat_dom"/>
</dbReference>
<dbReference type="InterPro" id="IPR009080">
    <property type="entry name" value="tRNAsynth_Ia_anticodon-bd"/>
</dbReference>
<dbReference type="NCBIfam" id="TIGR00435">
    <property type="entry name" value="cysS"/>
    <property type="match status" value="1"/>
</dbReference>
<dbReference type="PANTHER" id="PTHR10890:SF3">
    <property type="entry name" value="CYSTEINE--TRNA LIGASE, CYTOPLASMIC"/>
    <property type="match status" value="1"/>
</dbReference>
<dbReference type="PANTHER" id="PTHR10890">
    <property type="entry name" value="CYSTEINYL-TRNA SYNTHETASE"/>
    <property type="match status" value="1"/>
</dbReference>
<dbReference type="Pfam" id="PF09190">
    <property type="entry name" value="DALR_2"/>
    <property type="match status" value="1"/>
</dbReference>
<dbReference type="Pfam" id="PF01406">
    <property type="entry name" value="tRNA-synt_1e"/>
    <property type="match status" value="1"/>
</dbReference>
<dbReference type="PRINTS" id="PR00983">
    <property type="entry name" value="TRNASYNTHCYS"/>
</dbReference>
<dbReference type="SMART" id="SM00840">
    <property type="entry name" value="DALR_2"/>
    <property type="match status" value="1"/>
</dbReference>
<dbReference type="SUPFAM" id="SSF47323">
    <property type="entry name" value="Anticodon-binding domain of a subclass of class I aminoacyl-tRNA synthetases"/>
    <property type="match status" value="1"/>
</dbReference>
<dbReference type="SUPFAM" id="SSF52374">
    <property type="entry name" value="Nucleotidylyl transferase"/>
    <property type="match status" value="1"/>
</dbReference>
<reference key="1">
    <citation type="submission" date="2005-08" db="EMBL/GenBank/DDBJ databases">
        <title>Complete sequence of Pelodictyon luteolum DSM 273.</title>
        <authorList>
            <consortium name="US DOE Joint Genome Institute"/>
            <person name="Copeland A."/>
            <person name="Lucas S."/>
            <person name="Lapidus A."/>
            <person name="Barry K."/>
            <person name="Detter J.C."/>
            <person name="Glavina T."/>
            <person name="Hammon N."/>
            <person name="Israni S."/>
            <person name="Pitluck S."/>
            <person name="Bryant D."/>
            <person name="Schmutz J."/>
            <person name="Larimer F."/>
            <person name="Land M."/>
            <person name="Kyrpides N."/>
            <person name="Ivanova N."/>
            <person name="Richardson P."/>
        </authorList>
    </citation>
    <scope>NUCLEOTIDE SEQUENCE [LARGE SCALE GENOMIC DNA]</scope>
    <source>
        <strain>DSM 273 / BCRC 81028 / 2530</strain>
    </source>
</reference>
<evidence type="ECO:0000255" key="1">
    <source>
        <dbReference type="HAMAP-Rule" id="MF_00041"/>
    </source>
</evidence>
<protein>
    <recommendedName>
        <fullName evidence="1">Cysteine--tRNA ligase</fullName>
        <ecNumber evidence="1">6.1.1.16</ecNumber>
    </recommendedName>
    <alternativeName>
        <fullName evidence="1">Cysteinyl-tRNA synthetase</fullName>
        <shortName evidence="1">CysRS</shortName>
    </alternativeName>
</protein>
<sequence>MPLVIFNSLGREKQLFEPLHPGVVGIYVCGPTVYGHAHLGHAKSYVSFDVVVRWLRESGYRVKYVQNITDVGHLSDDADEGEDKIARQARLEKTDPMEIAQFYTRSFLDDMDRLGVLRPNISPLATGHIPEQIALVDKLVKRGHAYEVNGNVYFSVESFPGYGKLSGRTDLDAVQSGARVGVRSEKHNPSDFALWKKAEEGHLMQWDSPWGMGYPGWHLECSAMSMKYLGDTIDIHGGGMENRFPHHECEIAQSEAANEKPYVRYWMHNNMVTVNGTKMGKSLKNAVNLKEIFKTVDPLAVRFFILQSHYRSPLDYSDTAVAGSTAGLQKLRETRQRLIEATPGTGLLDAAPFSLRFREAMDDDFNTPVAIAALFDFSKALNTALDRPDGLNASSLEAARELFSTAAVTVLGIMTEDAEGGMHDGGRSAETLDEVMGVLMELRSEARKNKDFATSDLIRDHLLAAGIEIKDTREGASWSKTRH</sequence>
<keyword id="KW-0030">Aminoacyl-tRNA synthetase</keyword>
<keyword id="KW-0067">ATP-binding</keyword>
<keyword id="KW-0963">Cytoplasm</keyword>
<keyword id="KW-0436">Ligase</keyword>
<keyword id="KW-0479">Metal-binding</keyword>
<keyword id="KW-0547">Nucleotide-binding</keyword>
<keyword id="KW-0648">Protein biosynthesis</keyword>
<keyword id="KW-1185">Reference proteome</keyword>
<keyword id="KW-0862">Zinc</keyword>
<gene>
    <name evidence="1" type="primary">cysS</name>
    <name type="ordered locus">Plut_0211</name>
</gene>
<proteinExistence type="inferred from homology"/>
<organism>
    <name type="scientific">Chlorobium luteolum (strain DSM 273 / BCRC 81028 / 2530)</name>
    <name type="common">Pelodictyon luteolum</name>
    <dbReference type="NCBI Taxonomy" id="319225"/>
    <lineage>
        <taxon>Bacteria</taxon>
        <taxon>Pseudomonadati</taxon>
        <taxon>Chlorobiota</taxon>
        <taxon>Chlorobiia</taxon>
        <taxon>Chlorobiales</taxon>
        <taxon>Chlorobiaceae</taxon>
        <taxon>Chlorobium/Pelodictyon group</taxon>
        <taxon>Pelodictyon</taxon>
    </lineage>
</organism>